<name>RL2_BART1</name>
<keyword id="KW-0687">Ribonucleoprotein</keyword>
<keyword id="KW-0689">Ribosomal protein</keyword>
<keyword id="KW-0694">RNA-binding</keyword>
<keyword id="KW-0699">rRNA-binding</keyword>
<sequence>MALKQFNPTTPGQRQLVIVERSGLYKGKPVKMLTEGLSSKGGRNNRGRVTARFQGGGHKRSYRFVDFKRLKRDVLAKVERLEYDPNRTAFIALIRYEDGQLSYILAPQRLGVGDSVVAGSNVDVKPGNAMPLGNMPVGTIIHNVEMKPGKGGQIARSAGAYAQLVGRDHGMAILRLNSGEQRLVSSSCFATVGAVSNPDHGNINDGKAGRSRWRGKRPHVRGVAMNPVDHPHGGGEGRTSGGRHPVSPWGKPTKGKRTRSNKATDKFIMRTRHQRKK</sequence>
<protein>
    <recommendedName>
        <fullName evidence="1">Large ribosomal subunit protein uL2</fullName>
    </recommendedName>
    <alternativeName>
        <fullName evidence="3">50S ribosomal protein L2</fullName>
    </alternativeName>
</protein>
<dbReference type="EMBL" id="AM260525">
    <property type="protein sequence ID" value="CAK01861.1"/>
    <property type="molecule type" value="Genomic_DNA"/>
</dbReference>
<dbReference type="RefSeq" id="WP_012231995.1">
    <property type="nucleotide sequence ID" value="NC_010161.1"/>
</dbReference>
<dbReference type="SMR" id="A9IW24"/>
<dbReference type="KEGG" id="btr:BT_1515"/>
<dbReference type="eggNOG" id="COG0090">
    <property type="taxonomic scope" value="Bacteria"/>
</dbReference>
<dbReference type="HOGENOM" id="CLU_036235_2_1_5"/>
<dbReference type="Proteomes" id="UP000001592">
    <property type="component" value="Chromosome"/>
</dbReference>
<dbReference type="GO" id="GO:0015934">
    <property type="term" value="C:large ribosomal subunit"/>
    <property type="evidence" value="ECO:0007669"/>
    <property type="project" value="InterPro"/>
</dbReference>
<dbReference type="GO" id="GO:0019843">
    <property type="term" value="F:rRNA binding"/>
    <property type="evidence" value="ECO:0007669"/>
    <property type="project" value="UniProtKB-UniRule"/>
</dbReference>
<dbReference type="GO" id="GO:0003735">
    <property type="term" value="F:structural constituent of ribosome"/>
    <property type="evidence" value="ECO:0007669"/>
    <property type="project" value="InterPro"/>
</dbReference>
<dbReference type="GO" id="GO:0016740">
    <property type="term" value="F:transferase activity"/>
    <property type="evidence" value="ECO:0007669"/>
    <property type="project" value="InterPro"/>
</dbReference>
<dbReference type="GO" id="GO:0002181">
    <property type="term" value="P:cytoplasmic translation"/>
    <property type="evidence" value="ECO:0007669"/>
    <property type="project" value="TreeGrafter"/>
</dbReference>
<dbReference type="FunFam" id="2.30.30.30:FF:000001">
    <property type="entry name" value="50S ribosomal protein L2"/>
    <property type="match status" value="1"/>
</dbReference>
<dbReference type="FunFam" id="2.40.50.140:FF:000003">
    <property type="entry name" value="50S ribosomal protein L2"/>
    <property type="match status" value="1"/>
</dbReference>
<dbReference type="FunFam" id="4.10.950.10:FF:000001">
    <property type="entry name" value="50S ribosomal protein L2"/>
    <property type="match status" value="1"/>
</dbReference>
<dbReference type="Gene3D" id="2.30.30.30">
    <property type="match status" value="1"/>
</dbReference>
<dbReference type="Gene3D" id="2.40.50.140">
    <property type="entry name" value="Nucleic acid-binding proteins"/>
    <property type="match status" value="1"/>
</dbReference>
<dbReference type="Gene3D" id="4.10.950.10">
    <property type="entry name" value="Ribosomal protein L2, domain 3"/>
    <property type="match status" value="1"/>
</dbReference>
<dbReference type="HAMAP" id="MF_01320_B">
    <property type="entry name" value="Ribosomal_uL2_B"/>
    <property type="match status" value="1"/>
</dbReference>
<dbReference type="InterPro" id="IPR012340">
    <property type="entry name" value="NA-bd_OB-fold"/>
</dbReference>
<dbReference type="InterPro" id="IPR014722">
    <property type="entry name" value="Rib_uL2_dom2"/>
</dbReference>
<dbReference type="InterPro" id="IPR002171">
    <property type="entry name" value="Ribosomal_uL2"/>
</dbReference>
<dbReference type="InterPro" id="IPR005880">
    <property type="entry name" value="Ribosomal_uL2_bac/org-type"/>
</dbReference>
<dbReference type="InterPro" id="IPR022669">
    <property type="entry name" value="Ribosomal_uL2_C"/>
</dbReference>
<dbReference type="InterPro" id="IPR022671">
    <property type="entry name" value="Ribosomal_uL2_CS"/>
</dbReference>
<dbReference type="InterPro" id="IPR014726">
    <property type="entry name" value="Ribosomal_uL2_dom3"/>
</dbReference>
<dbReference type="InterPro" id="IPR022666">
    <property type="entry name" value="Ribosomal_uL2_RNA-bd_dom"/>
</dbReference>
<dbReference type="InterPro" id="IPR008991">
    <property type="entry name" value="Translation_prot_SH3-like_sf"/>
</dbReference>
<dbReference type="NCBIfam" id="TIGR01171">
    <property type="entry name" value="rplB_bact"/>
    <property type="match status" value="1"/>
</dbReference>
<dbReference type="PANTHER" id="PTHR13691:SF5">
    <property type="entry name" value="LARGE RIBOSOMAL SUBUNIT PROTEIN UL2M"/>
    <property type="match status" value="1"/>
</dbReference>
<dbReference type="PANTHER" id="PTHR13691">
    <property type="entry name" value="RIBOSOMAL PROTEIN L2"/>
    <property type="match status" value="1"/>
</dbReference>
<dbReference type="Pfam" id="PF00181">
    <property type="entry name" value="Ribosomal_L2"/>
    <property type="match status" value="1"/>
</dbReference>
<dbReference type="Pfam" id="PF03947">
    <property type="entry name" value="Ribosomal_L2_C"/>
    <property type="match status" value="1"/>
</dbReference>
<dbReference type="PIRSF" id="PIRSF002158">
    <property type="entry name" value="Ribosomal_L2"/>
    <property type="match status" value="1"/>
</dbReference>
<dbReference type="SMART" id="SM01383">
    <property type="entry name" value="Ribosomal_L2"/>
    <property type="match status" value="1"/>
</dbReference>
<dbReference type="SMART" id="SM01382">
    <property type="entry name" value="Ribosomal_L2_C"/>
    <property type="match status" value="1"/>
</dbReference>
<dbReference type="SUPFAM" id="SSF50249">
    <property type="entry name" value="Nucleic acid-binding proteins"/>
    <property type="match status" value="1"/>
</dbReference>
<dbReference type="SUPFAM" id="SSF50104">
    <property type="entry name" value="Translation proteins SH3-like domain"/>
    <property type="match status" value="1"/>
</dbReference>
<dbReference type="PROSITE" id="PS00467">
    <property type="entry name" value="RIBOSOMAL_L2"/>
    <property type="match status" value="1"/>
</dbReference>
<comment type="function">
    <text evidence="1">One of the primary rRNA binding proteins. Required for association of the 30S and 50S subunits to form the 70S ribosome, for tRNA binding and peptide bond formation. It has been suggested to have peptidyltransferase activity; this is somewhat controversial. Makes several contacts with the 16S rRNA in the 70S ribosome.</text>
</comment>
<comment type="subunit">
    <text evidence="1">Part of the 50S ribosomal subunit. Forms a bridge to the 30S subunit in the 70S ribosome.</text>
</comment>
<comment type="similarity">
    <text evidence="1">Belongs to the universal ribosomal protein uL2 family.</text>
</comment>
<reference key="1">
    <citation type="journal article" date="2007" name="Nat. Genet.">
        <title>Genomic analysis of Bartonella identifies type IV secretion systems as host adaptability factors.</title>
        <authorList>
            <person name="Saenz H.L."/>
            <person name="Engel P."/>
            <person name="Stoeckli M.C."/>
            <person name="Lanz C."/>
            <person name="Raddatz G."/>
            <person name="Vayssier-Taussat M."/>
            <person name="Birtles R."/>
            <person name="Schuster S.C."/>
            <person name="Dehio C."/>
        </authorList>
    </citation>
    <scope>NUCLEOTIDE SEQUENCE [LARGE SCALE GENOMIC DNA]</scope>
    <source>
        <strain>CIP 105476 / IBS 506</strain>
    </source>
</reference>
<gene>
    <name evidence="1" type="primary">rplB</name>
    <name type="ordered locus">BT_1515</name>
</gene>
<feature type="chain" id="PRO_1000086318" description="Large ribosomal subunit protein uL2">
    <location>
        <begin position="1"/>
        <end position="277"/>
    </location>
</feature>
<feature type="region of interest" description="Disordered" evidence="2">
    <location>
        <begin position="222"/>
        <end position="277"/>
    </location>
</feature>
<accession>A9IW24</accession>
<proteinExistence type="inferred from homology"/>
<evidence type="ECO:0000255" key="1">
    <source>
        <dbReference type="HAMAP-Rule" id="MF_01320"/>
    </source>
</evidence>
<evidence type="ECO:0000256" key="2">
    <source>
        <dbReference type="SAM" id="MobiDB-lite"/>
    </source>
</evidence>
<evidence type="ECO:0000305" key="3"/>
<organism>
    <name type="scientific">Bartonella tribocorum (strain CIP 105476 / IBS 506)</name>
    <dbReference type="NCBI Taxonomy" id="382640"/>
    <lineage>
        <taxon>Bacteria</taxon>
        <taxon>Pseudomonadati</taxon>
        <taxon>Pseudomonadota</taxon>
        <taxon>Alphaproteobacteria</taxon>
        <taxon>Hyphomicrobiales</taxon>
        <taxon>Bartonellaceae</taxon>
        <taxon>Bartonella</taxon>
    </lineage>
</organism>